<organism>
    <name type="scientific">Acidovorax sp. (strain JS42)</name>
    <dbReference type="NCBI Taxonomy" id="232721"/>
    <lineage>
        <taxon>Bacteria</taxon>
        <taxon>Pseudomonadati</taxon>
        <taxon>Pseudomonadota</taxon>
        <taxon>Betaproteobacteria</taxon>
        <taxon>Burkholderiales</taxon>
        <taxon>Comamonadaceae</taxon>
        <taxon>Acidovorax</taxon>
    </lineage>
</organism>
<dbReference type="EMBL" id="CP000539">
    <property type="protein sequence ID" value="ABM40872.1"/>
    <property type="molecule type" value="Genomic_DNA"/>
</dbReference>
<dbReference type="SMR" id="A1W3P7"/>
<dbReference type="STRING" id="232721.Ajs_0625"/>
<dbReference type="KEGG" id="ajs:Ajs_0625"/>
<dbReference type="eggNOG" id="COG0102">
    <property type="taxonomic scope" value="Bacteria"/>
</dbReference>
<dbReference type="HOGENOM" id="CLU_082184_2_2_4"/>
<dbReference type="Proteomes" id="UP000000645">
    <property type="component" value="Chromosome"/>
</dbReference>
<dbReference type="GO" id="GO:0022625">
    <property type="term" value="C:cytosolic large ribosomal subunit"/>
    <property type="evidence" value="ECO:0007669"/>
    <property type="project" value="TreeGrafter"/>
</dbReference>
<dbReference type="GO" id="GO:0003729">
    <property type="term" value="F:mRNA binding"/>
    <property type="evidence" value="ECO:0007669"/>
    <property type="project" value="TreeGrafter"/>
</dbReference>
<dbReference type="GO" id="GO:0003735">
    <property type="term" value="F:structural constituent of ribosome"/>
    <property type="evidence" value="ECO:0007669"/>
    <property type="project" value="InterPro"/>
</dbReference>
<dbReference type="GO" id="GO:0017148">
    <property type="term" value="P:negative regulation of translation"/>
    <property type="evidence" value="ECO:0007669"/>
    <property type="project" value="TreeGrafter"/>
</dbReference>
<dbReference type="GO" id="GO:0006412">
    <property type="term" value="P:translation"/>
    <property type="evidence" value="ECO:0007669"/>
    <property type="project" value="UniProtKB-UniRule"/>
</dbReference>
<dbReference type="CDD" id="cd00392">
    <property type="entry name" value="Ribosomal_L13"/>
    <property type="match status" value="1"/>
</dbReference>
<dbReference type="FunFam" id="3.90.1180.10:FF:000001">
    <property type="entry name" value="50S ribosomal protein L13"/>
    <property type="match status" value="1"/>
</dbReference>
<dbReference type="Gene3D" id="3.90.1180.10">
    <property type="entry name" value="Ribosomal protein L13"/>
    <property type="match status" value="1"/>
</dbReference>
<dbReference type="HAMAP" id="MF_01366">
    <property type="entry name" value="Ribosomal_uL13"/>
    <property type="match status" value="1"/>
</dbReference>
<dbReference type="InterPro" id="IPR005822">
    <property type="entry name" value="Ribosomal_uL13"/>
</dbReference>
<dbReference type="InterPro" id="IPR005823">
    <property type="entry name" value="Ribosomal_uL13_bac-type"/>
</dbReference>
<dbReference type="InterPro" id="IPR036899">
    <property type="entry name" value="Ribosomal_uL13_sf"/>
</dbReference>
<dbReference type="NCBIfam" id="TIGR01066">
    <property type="entry name" value="rplM_bact"/>
    <property type="match status" value="1"/>
</dbReference>
<dbReference type="PANTHER" id="PTHR11545:SF2">
    <property type="entry name" value="LARGE RIBOSOMAL SUBUNIT PROTEIN UL13M"/>
    <property type="match status" value="1"/>
</dbReference>
<dbReference type="PANTHER" id="PTHR11545">
    <property type="entry name" value="RIBOSOMAL PROTEIN L13"/>
    <property type="match status" value="1"/>
</dbReference>
<dbReference type="Pfam" id="PF00572">
    <property type="entry name" value="Ribosomal_L13"/>
    <property type="match status" value="1"/>
</dbReference>
<dbReference type="PIRSF" id="PIRSF002181">
    <property type="entry name" value="Ribosomal_L13"/>
    <property type="match status" value="1"/>
</dbReference>
<dbReference type="SUPFAM" id="SSF52161">
    <property type="entry name" value="Ribosomal protein L13"/>
    <property type="match status" value="1"/>
</dbReference>
<reference key="1">
    <citation type="submission" date="2006-12" db="EMBL/GenBank/DDBJ databases">
        <title>Complete sequence of chromosome 1 of Acidovorax sp. JS42.</title>
        <authorList>
            <person name="Copeland A."/>
            <person name="Lucas S."/>
            <person name="Lapidus A."/>
            <person name="Barry K."/>
            <person name="Detter J.C."/>
            <person name="Glavina del Rio T."/>
            <person name="Dalin E."/>
            <person name="Tice H."/>
            <person name="Pitluck S."/>
            <person name="Chertkov O."/>
            <person name="Brettin T."/>
            <person name="Bruce D."/>
            <person name="Han C."/>
            <person name="Tapia R."/>
            <person name="Gilna P."/>
            <person name="Schmutz J."/>
            <person name="Larimer F."/>
            <person name="Land M."/>
            <person name="Hauser L."/>
            <person name="Kyrpides N."/>
            <person name="Kim E."/>
            <person name="Stahl D."/>
            <person name="Richardson P."/>
        </authorList>
    </citation>
    <scope>NUCLEOTIDE SEQUENCE [LARGE SCALE GENOMIC DNA]</scope>
    <source>
        <strain>JS42</strain>
    </source>
</reference>
<gene>
    <name evidence="1" type="primary">rplM</name>
    <name type="ordered locus">Ajs_0625</name>
</gene>
<name>RL13_ACISJ</name>
<feature type="chain" id="PRO_1000055334" description="Large ribosomal subunit protein uL13">
    <location>
        <begin position="1"/>
        <end position="142"/>
    </location>
</feature>
<accession>A1W3P7</accession>
<sequence length="142" mass="15564">MSTFSAKPAEVVHEWFVIDATDKVLGRVASEVALRLRGKHKAIYTPHVDTGDYIVIINASKLKVTGTKSLDKVYYRHSGYPGGITATNFRDLQAKHPGRALEKAVKGMLPKGPLGYAMIKKLKVYGGAEHPHTAQQPKALEI</sequence>
<evidence type="ECO:0000255" key="1">
    <source>
        <dbReference type="HAMAP-Rule" id="MF_01366"/>
    </source>
</evidence>
<evidence type="ECO:0000305" key="2"/>
<comment type="function">
    <text evidence="1">This protein is one of the early assembly proteins of the 50S ribosomal subunit, although it is not seen to bind rRNA by itself. It is important during the early stages of 50S assembly.</text>
</comment>
<comment type="subunit">
    <text evidence="1">Part of the 50S ribosomal subunit.</text>
</comment>
<comment type="similarity">
    <text evidence="1">Belongs to the universal ribosomal protein uL13 family.</text>
</comment>
<protein>
    <recommendedName>
        <fullName evidence="1">Large ribosomal subunit protein uL13</fullName>
    </recommendedName>
    <alternativeName>
        <fullName evidence="2">50S ribosomal protein L13</fullName>
    </alternativeName>
</protein>
<proteinExistence type="inferred from homology"/>
<keyword id="KW-0687">Ribonucleoprotein</keyword>
<keyword id="KW-0689">Ribosomal protein</keyword>